<proteinExistence type="inferred from homology"/>
<organism>
    <name type="scientific">Rhizorhabdus wittichii (strain DSM 6014 / CCUG 31198 / JCM 15750 / NBRC 105917 / EY 4224 / RW1)</name>
    <name type="common">Sphingomonas wittichii</name>
    <dbReference type="NCBI Taxonomy" id="392499"/>
    <lineage>
        <taxon>Bacteria</taxon>
        <taxon>Pseudomonadati</taxon>
        <taxon>Pseudomonadota</taxon>
        <taxon>Alphaproteobacteria</taxon>
        <taxon>Sphingomonadales</taxon>
        <taxon>Sphingomonadaceae</taxon>
        <taxon>Rhizorhabdus</taxon>
    </lineage>
</organism>
<evidence type="ECO:0000250" key="1"/>
<evidence type="ECO:0000255" key="2">
    <source>
        <dbReference type="HAMAP-Rule" id="MF_01109"/>
    </source>
</evidence>
<comment type="function">
    <text evidence="1">Reversibly catalyzes the transfer of the carbamoyl group from carbamoyl phosphate (CP) to the N(epsilon) atom of ornithine (ORN) to produce L-citrulline.</text>
</comment>
<comment type="catalytic activity">
    <reaction evidence="2">
        <text>carbamoyl phosphate + L-ornithine = L-citrulline + phosphate + H(+)</text>
        <dbReference type="Rhea" id="RHEA:19513"/>
        <dbReference type="ChEBI" id="CHEBI:15378"/>
        <dbReference type="ChEBI" id="CHEBI:43474"/>
        <dbReference type="ChEBI" id="CHEBI:46911"/>
        <dbReference type="ChEBI" id="CHEBI:57743"/>
        <dbReference type="ChEBI" id="CHEBI:58228"/>
        <dbReference type="EC" id="2.1.3.3"/>
    </reaction>
</comment>
<comment type="pathway">
    <text evidence="2">Amino-acid biosynthesis; L-arginine biosynthesis; L-arginine from L-ornithine and carbamoyl phosphate: step 1/3.</text>
</comment>
<comment type="subcellular location">
    <subcellularLocation>
        <location evidence="2">Cytoplasm</location>
    </subcellularLocation>
</comment>
<comment type="similarity">
    <text evidence="2">Belongs to the aspartate/ornithine carbamoyltransferase superfamily. OTCase family.</text>
</comment>
<keyword id="KW-0028">Amino-acid biosynthesis</keyword>
<keyword id="KW-0055">Arginine biosynthesis</keyword>
<keyword id="KW-0963">Cytoplasm</keyword>
<keyword id="KW-1185">Reference proteome</keyword>
<keyword id="KW-0808">Transferase</keyword>
<accession>A5V656</accession>
<feature type="chain" id="PRO_1000084862" description="Ornithine carbamoyltransferase">
    <location>
        <begin position="1"/>
        <end position="309"/>
    </location>
</feature>
<feature type="binding site" evidence="2">
    <location>
        <begin position="57"/>
        <end position="60"/>
    </location>
    <ligand>
        <name>carbamoyl phosphate</name>
        <dbReference type="ChEBI" id="CHEBI:58228"/>
    </ligand>
</feature>
<feature type="binding site" evidence="2">
    <location>
        <position position="84"/>
    </location>
    <ligand>
        <name>carbamoyl phosphate</name>
        <dbReference type="ChEBI" id="CHEBI:58228"/>
    </ligand>
</feature>
<feature type="binding site" evidence="2">
    <location>
        <position position="108"/>
    </location>
    <ligand>
        <name>carbamoyl phosphate</name>
        <dbReference type="ChEBI" id="CHEBI:58228"/>
    </ligand>
</feature>
<feature type="binding site" evidence="2">
    <location>
        <begin position="135"/>
        <end position="138"/>
    </location>
    <ligand>
        <name>carbamoyl phosphate</name>
        <dbReference type="ChEBI" id="CHEBI:58228"/>
    </ligand>
</feature>
<feature type="binding site" evidence="2">
    <location>
        <position position="166"/>
    </location>
    <ligand>
        <name>L-ornithine</name>
        <dbReference type="ChEBI" id="CHEBI:46911"/>
    </ligand>
</feature>
<feature type="binding site" evidence="2">
    <location>
        <position position="226"/>
    </location>
    <ligand>
        <name>L-ornithine</name>
        <dbReference type="ChEBI" id="CHEBI:46911"/>
    </ligand>
</feature>
<feature type="binding site" evidence="2">
    <location>
        <begin position="230"/>
        <end position="231"/>
    </location>
    <ligand>
        <name>L-ornithine</name>
        <dbReference type="ChEBI" id="CHEBI:46911"/>
    </ligand>
</feature>
<feature type="binding site" evidence="2">
    <location>
        <begin position="265"/>
        <end position="266"/>
    </location>
    <ligand>
        <name>carbamoyl phosphate</name>
        <dbReference type="ChEBI" id="CHEBI:58228"/>
    </ligand>
</feature>
<feature type="binding site" evidence="2">
    <location>
        <position position="293"/>
    </location>
    <ligand>
        <name>carbamoyl phosphate</name>
        <dbReference type="ChEBI" id="CHEBI:58228"/>
    </ligand>
</feature>
<protein>
    <recommendedName>
        <fullName evidence="2">Ornithine carbamoyltransferase</fullName>
        <shortName evidence="2">OTCase</shortName>
        <ecNumber evidence="2">2.1.3.3</ecNumber>
    </recommendedName>
</protein>
<gene>
    <name evidence="2" type="primary">argF</name>
    <name type="ordered locus">Swit_1408</name>
</gene>
<reference key="1">
    <citation type="journal article" date="2010" name="J. Bacteriol.">
        <title>Genome sequence of the dioxin-mineralizing bacterium Sphingomonas wittichii RW1.</title>
        <authorList>
            <person name="Miller T.R."/>
            <person name="Delcher A.L."/>
            <person name="Salzberg S.L."/>
            <person name="Saunders E."/>
            <person name="Detter J.C."/>
            <person name="Halden R.U."/>
        </authorList>
    </citation>
    <scope>NUCLEOTIDE SEQUENCE [LARGE SCALE GENOMIC DNA]</scope>
    <source>
        <strain>DSM 6014 / CCUG 31198 / JCM 15750 / NBRC 105917 / EY 4224 / RW1</strain>
    </source>
</reference>
<sequence length="309" mass="33386">MTRSFLDLADAGAAGVRLMLDEAVSRKKARAGLPKGAPDRDAPLAGHTLAMIFEKNSTRTRVSFDMAMRQLGGTTIVMDAGSMQLGRGETIADTARVLSRYVDAIMIRTDDHRKAVDLARYADVPVINGLTDRSHPCQIMADLQTILEHKGRVEGLGWAWLGDGNNVLHSIVEAGSLLGFPVRIGCPEGYDPDAEVLAEARARGGDILLSRDPAEVVRGADVVVTDTWISMGQAHAEEKLAAMMPFQVDEARMAQAAPDAAFLHCLPAHRGEEVVDAVIDGPHSLIWDEAENRLHAQKAVLLWCLGRLG</sequence>
<dbReference type="EC" id="2.1.3.3" evidence="2"/>
<dbReference type="EMBL" id="CP000699">
    <property type="protein sequence ID" value="ABQ67772.1"/>
    <property type="molecule type" value="Genomic_DNA"/>
</dbReference>
<dbReference type="SMR" id="A5V656"/>
<dbReference type="STRING" id="392499.Swit_1408"/>
<dbReference type="PaxDb" id="392499-Swit_1408"/>
<dbReference type="KEGG" id="swi:Swit_1408"/>
<dbReference type="eggNOG" id="COG0078">
    <property type="taxonomic scope" value="Bacteria"/>
</dbReference>
<dbReference type="HOGENOM" id="CLU_043846_3_2_5"/>
<dbReference type="OrthoDB" id="9802587at2"/>
<dbReference type="UniPathway" id="UPA00068">
    <property type="reaction ID" value="UER00112"/>
</dbReference>
<dbReference type="Proteomes" id="UP000001989">
    <property type="component" value="Chromosome"/>
</dbReference>
<dbReference type="GO" id="GO:0005737">
    <property type="term" value="C:cytoplasm"/>
    <property type="evidence" value="ECO:0007669"/>
    <property type="project" value="UniProtKB-SubCell"/>
</dbReference>
<dbReference type="GO" id="GO:0016597">
    <property type="term" value="F:amino acid binding"/>
    <property type="evidence" value="ECO:0007669"/>
    <property type="project" value="InterPro"/>
</dbReference>
<dbReference type="GO" id="GO:0004585">
    <property type="term" value="F:ornithine carbamoyltransferase activity"/>
    <property type="evidence" value="ECO:0007669"/>
    <property type="project" value="UniProtKB-UniRule"/>
</dbReference>
<dbReference type="GO" id="GO:0042450">
    <property type="term" value="P:arginine biosynthetic process via ornithine"/>
    <property type="evidence" value="ECO:0007669"/>
    <property type="project" value="TreeGrafter"/>
</dbReference>
<dbReference type="GO" id="GO:0019240">
    <property type="term" value="P:citrulline biosynthetic process"/>
    <property type="evidence" value="ECO:0007669"/>
    <property type="project" value="TreeGrafter"/>
</dbReference>
<dbReference type="GO" id="GO:0006526">
    <property type="term" value="P:L-arginine biosynthetic process"/>
    <property type="evidence" value="ECO:0007669"/>
    <property type="project" value="UniProtKB-UniRule"/>
</dbReference>
<dbReference type="FunFam" id="3.40.50.1370:FF:000008">
    <property type="entry name" value="Ornithine carbamoyltransferase"/>
    <property type="match status" value="1"/>
</dbReference>
<dbReference type="Gene3D" id="3.40.50.1370">
    <property type="entry name" value="Aspartate/ornithine carbamoyltransferase"/>
    <property type="match status" value="2"/>
</dbReference>
<dbReference type="HAMAP" id="MF_01109">
    <property type="entry name" value="OTCase"/>
    <property type="match status" value="1"/>
</dbReference>
<dbReference type="InterPro" id="IPR006132">
    <property type="entry name" value="Asp/Orn_carbamoyltranf_P-bd"/>
</dbReference>
<dbReference type="InterPro" id="IPR006130">
    <property type="entry name" value="Asp/Orn_carbamoylTrfase"/>
</dbReference>
<dbReference type="InterPro" id="IPR036901">
    <property type="entry name" value="Asp/Orn_carbamoylTrfase_sf"/>
</dbReference>
<dbReference type="InterPro" id="IPR006131">
    <property type="entry name" value="Asp_carbamoyltransf_Asp/Orn-bd"/>
</dbReference>
<dbReference type="InterPro" id="IPR002292">
    <property type="entry name" value="Orn/put_carbamltrans"/>
</dbReference>
<dbReference type="InterPro" id="IPR024904">
    <property type="entry name" value="OTCase_ArgI"/>
</dbReference>
<dbReference type="NCBIfam" id="TIGR00658">
    <property type="entry name" value="orni_carb_tr"/>
    <property type="match status" value="1"/>
</dbReference>
<dbReference type="NCBIfam" id="NF001986">
    <property type="entry name" value="PRK00779.1"/>
    <property type="match status" value="1"/>
</dbReference>
<dbReference type="PANTHER" id="PTHR45753">
    <property type="entry name" value="ORNITHINE CARBAMOYLTRANSFERASE, MITOCHONDRIAL"/>
    <property type="match status" value="1"/>
</dbReference>
<dbReference type="PANTHER" id="PTHR45753:SF3">
    <property type="entry name" value="ORNITHINE TRANSCARBAMYLASE, MITOCHONDRIAL"/>
    <property type="match status" value="1"/>
</dbReference>
<dbReference type="Pfam" id="PF00185">
    <property type="entry name" value="OTCace"/>
    <property type="match status" value="1"/>
</dbReference>
<dbReference type="Pfam" id="PF02729">
    <property type="entry name" value="OTCace_N"/>
    <property type="match status" value="1"/>
</dbReference>
<dbReference type="PRINTS" id="PR00100">
    <property type="entry name" value="AOTCASE"/>
</dbReference>
<dbReference type="PRINTS" id="PR00102">
    <property type="entry name" value="OTCASE"/>
</dbReference>
<dbReference type="SUPFAM" id="SSF53671">
    <property type="entry name" value="Aspartate/ornithine carbamoyltransferase"/>
    <property type="match status" value="1"/>
</dbReference>
<dbReference type="PROSITE" id="PS00097">
    <property type="entry name" value="CARBAMOYLTRANSFERASE"/>
    <property type="match status" value="1"/>
</dbReference>
<name>OTC_RHIWR</name>